<proteinExistence type="inferred from homology"/>
<gene>
    <name evidence="1" type="primary">rplN</name>
    <name type="ordered locus">Clim_2219</name>
</gene>
<dbReference type="EMBL" id="CP001097">
    <property type="protein sequence ID" value="ACD91243.1"/>
    <property type="molecule type" value="Genomic_DNA"/>
</dbReference>
<dbReference type="RefSeq" id="WP_012467110.1">
    <property type="nucleotide sequence ID" value="NC_010803.1"/>
</dbReference>
<dbReference type="SMR" id="B3EGY0"/>
<dbReference type="STRING" id="290315.Clim_2219"/>
<dbReference type="KEGG" id="cli:Clim_2219"/>
<dbReference type="eggNOG" id="COG0093">
    <property type="taxonomic scope" value="Bacteria"/>
</dbReference>
<dbReference type="HOGENOM" id="CLU_095071_2_1_10"/>
<dbReference type="OrthoDB" id="9806379at2"/>
<dbReference type="Proteomes" id="UP000008841">
    <property type="component" value="Chromosome"/>
</dbReference>
<dbReference type="GO" id="GO:0022625">
    <property type="term" value="C:cytosolic large ribosomal subunit"/>
    <property type="evidence" value="ECO:0007669"/>
    <property type="project" value="TreeGrafter"/>
</dbReference>
<dbReference type="GO" id="GO:0070180">
    <property type="term" value="F:large ribosomal subunit rRNA binding"/>
    <property type="evidence" value="ECO:0007669"/>
    <property type="project" value="TreeGrafter"/>
</dbReference>
<dbReference type="GO" id="GO:0003735">
    <property type="term" value="F:structural constituent of ribosome"/>
    <property type="evidence" value="ECO:0007669"/>
    <property type="project" value="InterPro"/>
</dbReference>
<dbReference type="GO" id="GO:0006412">
    <property type="term" value="P:translation"/>
    <property type="evidence" value="ECO:0007669"/>
    <property type="project" value="UniProtKB-UniRule"/>
</dbReference>
<dbReference type="CDD" id="cd00337">
    <property type="entry name" value="Ribosomal_uL14"/>
    <property type="match status" value="1"/>
</dbReference>
<dbReference type="FunFam" id="2.40.150.20:FF:000001">
    <property type="entry name" value="50S ribosomal protein L14"/>
    <property type="match status" value="1"/>
</dbReference>
<dbReference type="Gene3D" id="2.40.150.20">
    <property type="entry name" value="Ribosomal protein L14"/>
    <property type="match status" value="1"/>
</dbReference>
<dbReference type="HAMAP" id="MF_01367">
    <property type="entry name" value="Ribosomal_uL14"/>
    <property type="match status" value="1"/>
</dbReference>
<dbReference type="InterPro" id="IPR000218">
    <property type="entry name" value="Ribosomal_uL14"/>
</dbReference>
<dbReference type="InterPro" id="IPR005745">
    <property type="entry name" value="Ribosomal_uL14_bac-type"/>
</dbReference>
<dbReference type="InterPro" id="IPR019972">
    <property type="entry name" value="Ribosomal_uL14_CS"/>
</dbReference>
<dbReference type="InterPro" id="IPR036853">
    <property type="entry name" value="Ribosomal_uL14_sf"/>
</dbReference>
<dbReference type="NCBIfam" id="TIGR01067">
    <property type="entry name" value="rplN_bact"/>
    <property type="match status" value="1"/>
</dbReference>
<dbReference type="PANTHER" id="PTHR11761">
    <property type="entry name" value="50S/60S RIBOSOMAL PROTEIN L14/L23"/>
    <property type="match status" value="1"/>
</dbReference>
<dbReference type="PANTHER" id="PTHR11761:SF3">
    <property type="entry name" value="LARGE RIBOSOMAL SUBUNIT PROTEIN UL14M"/>
    <property type="match status" value="1"/>
</dbReference>
<dbReference type="Pfam" id="PF00238">
    <property type="entry name" value="Ribosomal_L14"/>
    <property type="match status" value="1"/>
</dbReference>
<dbReference type="SMART" id="SM01374">
    <property type="entry name" value="Ribosomal_L14"/>
    <property type="match status" value="1"/>
</dbReference>
<dbReference type="SUPFAM" id="SSF50193">
    <property type="entry name" value="Ribosomal protein L14"/>
    <property type="match status" value="1"/>
</dbReference>
<dbReference type="PROSITE" id="PS00049">
    <property type="entry name" value="RIBOSOMAL_L14"/>
    <property type="match status" value="1"/>
</dbReference>
<comment type="function">
    <text evidence="1">Binds to 23S rRNA. Forms part of two intersubunit bridges in the 70S ribosome.</text>
</comment>
<comment type="subunit">
    <text evidence="1">Part of the 50S ribosomal subunit. Forms a cluster with proteins L3 and L19. In the 70S ribosome, L14 and L19 interact and together make contacts with the 16S rRNA in bridges B5 and B8.</text>
</comment>
<comment type="similarity">
    <text evidence="1">Belongs to the universal ribosomal protein uL14 family.</text>
</comment>
<sequence length="122" mass="13366">MIQKETNLVVADNSGAKKVRCIHVFGGTGRRYAGLGDQVIVSVKAAVPGGVVKKKDVCKAVVVRCAKEQRRKDGSYIRFDENAVVLLNAQGEPRGTRIFGPVARELRDRKYMKIVSLAPEVL</sequence>
<reference key="1">
    <citation type="submission" date="2008-05" db="EMBL/GenBank/DDBJ databases">
        <title>Complete sequence of Chlorobium limicola DSM 245.</title>
        <authorList>
            <consortium name="US DOE Joint Genome Institute"/>
            <person name="Lucas S."/>
            <person name="Copeland A."/>
            <person name="Lapidus A."/>
            <person name="Glavina del Rio T."/>
            <person name="Dalin E."/>
            <person name="Tice H."/>
            <person name="Bruce D."/>
            <person name="Goodwin L."/>
            <person name="Pitluck S."/>
            <person name="Schmutz J."/>
            <person name="Larimer F."/>
            <person name="Land M."/>
            <person name="Hauser L."/>
            <person name="Kyrpides N."/>
            <person name="Ovchinnikova G."/>
            <person name="Zhao F."/>
            <person name="Li T."/>
            <person name="Liu Z."/>
            <person name="Overmann J."/>
            <person name="Bryant D.A."/>
            <person name="Richardson P."/>
        </authorList>
    </citation>
    <scope>NUCLEOTIDE SEQUENCE [LARGE SCALE GENOMIC DNA]</scope>
    <source>
        <strain>DSM 245 / NBRC 103803 / 6330</strain>
    </source>
</reference>
<feature type="chain" id="PRO_1000144238" description="Large ribosomal subunit protein uL14">
    <location>
        <begin position="1"/>
        <end position="122"/>
    </location>
</feature>
<accession>B3EGY0</accession>
<organism>
    <name type="scientific">Chlorobium limicola (strain DSM 245 / NBRC 103803 / 6330)</name>
    <dbReference type="NCBI Taxonomy" id="290315"/>
    <lineage>
        <taxon>Bacteria</taxon>
        <taxon>Pseudomonadati</taxon>
        <taxon>Chlorobiota</taxon>
        <taxon>Chlorobiia</taxon>
        <taxon>Chlorobiales</taxon>
        <taxon>Chlorobiaceae</taxon>
        <taxon>Chlorobium/Pelodictyon group</taxon>
        <taxon>Chlorobium</taxon>
    </lineage>
</organism>
<keyword id="KW-0687">Ribonucleoprotein</keyword>
<keyword id="KW-0689">Ribosomal protein</keyword>
<keyword id="KW-0694">RNA-binding</keyword>
<keyword id="KW-0699">rRNA-binding</keyword>
<protein>
    <recommendedName>
        <fullName evidence="1">Large ribosomal subunit protein uL14</fullName>
    </recommendedName>
    <alternativeName>
        <fullName evidence="2">50S ribosomal protein L14</fullName>
    </alternativeName>
</protein>
<evidence type="ECO:0000255" key="1">
    <source>
        <dbReference type="HAMAP-Rule" id="MF_01367"/>
    </source>
</evidence>
<evidence type="ECO:0000305" key="2"/>
<name>RL14_CHLL2</name>